<protein>
    <recommendedName>
        <fullName>Uncharacterized protein ORF107a</fullName>
    </recommendedName>
</protein>
<sequence>MSLVIDIADTIVSLTALIGLIITLIKFHSQNKEDAIMQIRKIAQEEIVNFLDTDKFKHSIIDIMNESNVNSKVNDIDSKITQLLAILCYTDSKLKDTELCRSSDRSK</sequence>
<gene>
    <name type="ORF">ORF107a</name>
</gene>
<organismHost>
    <name type="scientific">Acidianus sp. F28</name>
    <dbReference type="NCBI Taxonomy" id="315458"/>
</organismHost>
<dbReference type="EMBL" id="AJ854042">
    <property type="protein sequence ID" value="CAH69434.1"/>
    <property type="molecule type" value="Genomic_DNA"/>
</dbReference>
<dbReference type="RefSeq" id="YP_001496972.1">
    <property type="nucleotide sequence ID" value="NC_009884.1"/>
</dbReference>
<dbReference type="KEGG" id="vg:5656096"/>
<dbReference type="Proteomes" id="UP000006364">
    <property type="component" value="Genome"/>
</dbReference>
<dbReference type="GO" id="GO:0033644">
    <property type="term" value="C:host cell membrane"/>
    <property type="evidence" value="ECO:0007669"/>
    <property type="project" value="UniProtKB-SubCell"/>
</dbReference>
<dbReference type="GO" id="GO:0016020">
    <property type="term" value="C:membrane"/>
    <property type="evidence" value="ECO:0007669"/>
    <property type="project" value="UniProtKB-KW"/>
</dbReference>
<organism>
    <name type="scientific">Acidianus filamentous virus 2 (isolate Italy/Pozzuoli)</name>
    <name type="common">AFV-2</name>
    <dbReference type="NCBI Taxonomy" id="654910"/>
    <lineage>
        <taxon>Viruses</taxon>
        <taxon>Adnaviria</taxon>
        <taxon>Zilligvirae</taxon>
        <taxon>Taleaviricota</taxon>
        <taxon>Tokiviricetes</taxon>
        <taxon>Ligamenvirales</taxon>
        <taxon>Lipothrixviridae</taxon>
        <taxon>Deltalipothrixvirus</taxon>
        <taxon>Acidianus filamentous virus 2</taxon>
    </lineage>
</organism>
<comment type="subcellular location">
    <subcellularLocation>
        <location evidence="2">Host membrane</location>
        <topology evidence="2">Single-pass membrane protein</topology>
    </subcellularLocation>
</comment>
<reference key="1">
    <citation type="journal article" date="2005" name="J. Bacteriol.">
        <title>Structure and genome organization of AFV2, a novel archaeal lipothrixvirus with unusual terminal and core structures.</title>
        <authorList>
            <person name="Haring M."/>
            <person name="Vestergaard G."/>
            <person name="Brugger K."/>
            <person name="Rachel R."/>
            <person name="Garrett R.A."/>
            <person name="Prangishvili D."/>
        </authorList>
    </citation>
    <scope>NUCLEOTIDE SEQUENCE [GENOMIC DNA]</scope>
</reference>
<feature type="chain" id="PRO_0000384500" description="Uncharacterized protein ORF107a">
    <location>
        <begin position="1"/>
        <end position="107"/>
    </location>
</feature>
<feature type="topological domain" description="Cytoplasmic" evidence="1">
    <location>
        <begin position="1"/>
        <end position="4"/>
    </location>
</feature>
<feature type="transmembrane region" description="Helical" evidence="1">
    <location>
        <begin position="5"/>
        <end position="25"/>
    </location>
</feature>
<feature type="topological domain" description="Extracellular" evidence="1">
    <location>
        <begin position="26"/>
        <end position="107"/>
    </location>
</feature>
<evidence type="ECO:0000255" key="1"/>
<evidence type="ECO:0000305" key="2"/>
<name>Y107A_AFV2P</name>
<accession>Q573C2</accession>
<proteinExistence type="predicted"/>
<keyword id="KW-1043">Host membrane</keyword>
<keyword id="KW-0472">Membrane</keyword>
<keyword id="KW-1185">Reference proteome</keyword>
<keyword id="KW-0812">Transmembrane</keyword>
<keyword id="KW-1133">Transmembrane helix</keyword>